<dbReference type="EC" id="2.7.7.8" evidence="1"/>
<dbReference type="EMBL" id="CP000949">
    <property type="protein sequence ID" value="ACA71230.1"/>
    <property type="molecule type" value="Genomic_DNA"/>
</dbReference>
<dbReference type="SMR" id="B1J2B3"/>
<dbReference type="STRING" id="390235.PputW619_0725"/>
<dbReference type="KEGG" id="ppw:PputW619_0725"/>
<dbReference type="eggNOG" id="COG1185">
    <property type="taxonomic scope" value="Bacteria"/>
</dbReference>
<dbReference type="HOGENOM" id="CLU_004217_2_2_6"/>
<dbReference type="OrthoDB" id="9804305at2"/>
<dbReference type="GO" id="GO:0005829">
    <property type="term" value="C:cytosol"/>
    <property type="evidence" value="ECO:0007669"/>
    <property type="project" value="TreeGrafter"/>
</dbReference>
<dbReference type="GO" id="GO:0000175">
    <property type="term" value="F:3'-5'-RNA exonuclease activity"/>
    <property type="evidence" value="ECO:0007669"/>
    <property type="project" value="TreeGrafter"/>
</dbReference>
<dbReference type="GO" id="GO:0000287">
    <property type="term" value="F:magnesium ion binding"/>
    <property type="evidence" value="ECO:0007669"/>
    <property type="project" value="UniProtKB-UniRule"/>
</dbReference>
<dbReference type="GO" id="GO:0004654">
    <property type="term" value="F:polyribonucleotide nucleotidyltransferase activity"/>
    <property type="evidence" value="ECO:0007669"/>
    <property type="project" value="UniProtKB-UniRule"/>
</dbReference>
<dbReference type="GO" id="GO:0003723">
    <property type="term" value="F:RNA binding"/>
    <property type="evidence" value="ECO:0007669"/>
    <property type="project" value="UniProtKB-UniRule"/>
</dbReference>
<dbReference type="GO" id="GO:0006402">
    <property type="term" value="P:mRNA catabolic process"/>
    <property type="evidence" value="ECO:0007669"/>
    <property type="project" value="UniProtKB-UniRule"/>
</dbReference>
<dbReference type="GO" id="GO:0006396">
    <property type="term" value="P:RNA processing"/>
    <property type="evidence" value="ECO:0007669"/>
    <property type="project" value="InterPro"/>
</dbReference>
<dbReference type="CDD" id="cd02393">
    <property type="entry name" value="KH-I_PNPase"/>
    <property type="match status" value="1"/>
</dbReference>
<dbReference type="CDD" id="cd11363">
    <property type="entry name" value="RNase_PH_PNPase_1"/>
    <property type="match status" value="1"/>
</dbReference>
<dbReference type="CDD" id="cd11364">
    <property type="entry name" value="RNase_PH_PNPase_2"/>
    <property type="match status" value="1"/>
</dbReference>
<dbReference type="CDD" id="cd04472">
    <property type="entry name" value="S1_PNPase"/>
    <property type="match status" value="1"/>
</dbReference>
<dbReference type="FunFam" id="2.40.50.140:FF:000023">
    <property type="entry name" value="Polyribonucleotide nucleotidyltransferase"/>
    <property type="match status" value="1"/>
</dbReference>
<dbReference type="FunFam" id="3.30.1370.10:FF:000001">
    <property type="entry name" value="Polyribonucleotide nucleotidyltransferase"/>
    <property type="match status" value="1"/>
</dbReference>
<dbReference type="FunFam" id="3.30.230.70:FF:000001">
    <property type="entry name" value="Polyribonucleotide nucleotidyltransferase"/>
    <property type="match status" value="1"/>
</dbReference>
<dbReference type="FunFam" id="3.30.230.70:FF:000002">
    <property type="entry name" value="Polyribonucleotide nucleotidyltransferase"/>
    <property type="match status" value="1"/>
</dbReference>
<dbReference type="Gene3D" id="3.30.230.70">
    <property type="entry name" value="GHMP Kinase, N-terminal domain"/>
    <property type="match status" value="2"/>
</dbReference>
<dbReference type="Gene3D" id="3.30.1370.10">
    <property type="entry name" value="K Homology domain, type 1"/>
    <property type="match status" value="1"/>
</dbReference>
<dbReference type="Gene3D" id="2.40.50.140">
    <property type="entry name" value="Nucleic acid-binding proteins"/>
    <property type="match status" value="1"/>
</dbReference>
<dbReference type="HAMAP" id="MF_01595">
    <property type="entry name" value="PNPase"/>
    <property type="match status" value="1"/>
</dbReference>
<dbReference type="InterPro" id="IPR001247">
    <property type="entry name" value="ExoRNase_PH_dom1"/>
</dbReference>
<dbReference type="InterPro" id="IPR015847">
    <property type="entry name" value="ExoRNase_PH_dom2"/>
</dbReference>
<dbReference type="InterPro" id="IPR036345">
    <property type="entry name" value="ExoRNase_PH_dom2_sf"/>
</dbReference>
<dbReference type="InterPro" id="IPR004087">
    <property type="entry name" value="KH_dom"/>
</dbReference>
<dbReference type="InterPro" id="IPR004088">
    <property type="entry name" value="KH_dom_type_1"/>
</dbReference>
<dbReference type="InterPro" id="IPR036612">
    <property type="entry name" value="KH_dom_type_1_sf"/>
</dbReference>
<dbReference type="InterPro" id="IPR012340">
    <property type="entry name" value="NA-bd_OB-fold"/>
</dbReference>
<dbReference type="InterPro" id="IPR012162">
    <property type="entry name" value="PNPase"/>
</dbReference>
<dbReference type="InterPro" id="IPR027408">
    <property type="entry name" value="PNPase/RNase_PH_dom_sf"/>
</dbReference>
<dbReference type="InterPro" id="IPR015848">
    <property type="entry name" value="PNPase_PH_RNA-bd_bac/org-type"/>
</dbReference>
<dbReference type="InterPro" id="IPR020568">
    <property type="entry name" value="Ribosomal_Su5_D2-typ_SF"/>
</dbReference>
<dbReference type="InterPro" id="IPR003029">
    <property type="entry name" value="S1_domain"/>
</dbReference>
<dbReference type="NCBIfam" id="TIGR03591">
    <property type="entry name" value="polynuc_phos"/>
    <property type="match status" value="1"/>
</dbReference>
<dbReference type="NCBIfam" id="NF008805">
    <property type="entry name" value="PRK11824.1"/>
    <property type="match status" value="1"/>
</dbReference>
<dbReference type="PANTHER" id="PTHR11252">
    <property type="entry name" value="POLYRIBONUCLEOTIDE NUCLEOTIDYLTRANSFERASE"/>
    <property type="match status" value="1"/>
</dbReference>
<dbReference type="PANTHER" id="PTHR11252:SF0">
    <property type="entry name" value="POLYRIBONUCLEOTIDE NUCLEOTIDYLTRANSFERASE 1, MITOCHONDRIAL"/>
    <property type="match status" value="1"/>
</dbReference>
<dbReference type="Pfam" id="PF00013">
    <property type="entry name" value="KH_1"/>
    <property type="match status" value="1"/>
</dbReference>
<dbReference type="Pfam" id="PF03726">
    <property type="entry name" value="PNPase"/>
    <property type="match status" value="1"/>
</dbReference>
<dbReference type="Pfam" id="PF01138">
    <property type="entry name" value="RNase_PH"/>
    <property type="match status" value="2"/>
</dbReference>
<dbReference type="Pfam" id="PF03725">
    <property type="entry name" value="RNase_PH_C"/>
    <property type="match status" value="2"/>
</dbReference>
<dbReference type="Pfam" id="PF00575">
    <property type="entry name" value="S1"/>
    <property type="match status" value="1"/>
</dbReference>
<dbReference type="PIRSF" id="PIRSF005499">
    <property type="entry name" value="PNPase"/>
    <property type="match status" value="1"/>
</dbReference>
<dbReference type="SMART" id="SM00322">
    <property type="entry name" value="KH"/>
    <property type="match status" value="1"/>
</dbReference>
<dbReference type="SMART" id="SM00316">
    <property type="entry name" value="S1"/>
    <property type="match status" value="1"/>
</dbReference>
<dbReference type="SUPFAM" id="SSF54791">
    <property type="entry name" value="Eukaryotic type KH-domain (KH-domain type I)"/>
    <property type="match status" value="1"/>
</dbReference>
<dbReference type="SUPFAM" id="SSF50249">
    <property type="entry name" value="Nucleic acid-binding proteins"/>
    <property type="match status" value="1"/>
</dbReference>
<dbReference type="SUPFAM" id="SSF55666">
    <property type="entry name" value="Ribonuclease PH domain 2-like"/>
    <property type="match status" value="2"/>
</dbReference>
<dbReference type="SUPFAM" id="SSF54211">
    <property type="entry name" value="Ribosomal protein S5 domain 2-like"/>
    <property type="match status" value="2"/>
</dbReference>
<dbReference type="PROSITE" id="PS50084">
    <property type="entry name" value="KH_TYPE_1"/>
    <property type="match status" value="1"/>
</dbReference>
<dbReference type="PROSITE" id="PS50126">
    <property type="entry name" value="S1"/>
    <property type="match status" value="1"/>
</dbReference>
<gene>
    <name evidence="1" type="primary">pnp</name>
    <name type="ordered locus">PputW619_0725</name>
</gene>
<accession>B1J2B3</accession>
<proteinExistence type="inferred from homology"/>
<feature type="chain" id="PRO_1000147947" description="Polyribonucleotide nucleotidyltransferase">
    <location>
        <begin position="1"/>
        <end position="701"/>
    </location>
</feature>
<feature type="domain" description="KH" evidence="1">
    <location>
        <begin position="554"/>
        <end position="613"/>
    </location>
</feature>
<feature type="domain" description="S1 motif" evidence="1">
    <location>
        <begin position="623"/>
        <end position="691"/>
    </location>
</feature>
<feature type="binding site" evidence="1">
    <location>
        <position position="487"/>
    </location>
    <ligand>
        <name>Mg(2+)</name>
        <dbReference type="ChEBI" id="CHEBI:18420"/>
    </ligand>
</feature>
<feature type="binding site" evidence="1">
    <location>
        <position position="493"/>
    </location>
    <ligand>
        <name>Mg(2+)</name>
        <dbReference type="ChEBI" id="CHEBI:18420"/>
    </ligand>
</feature>
<organism>
    <name type="scientific">Pseudomonas putida (strain W619)</name>
    <dbReference type="NCBI Taxonomy" id="390235"/>
    <lineage>
        <taxon>Bacteria</taxon>
        <taxon>Pseudomonadati</taxon>
        <taxon>Pseudomonadota</taxon>
        <taxon>Gammaproteobacteria</taxon>
        <taxon>Pseudomonadales</taxon>
        <taxon>Pseudomonadaceae</taxon>
        <taxon>Pseudomonas</taxon>
    </lineage>
</organism>
<name>PNP_PSEPW</name>
<evidence type="ECO:0000255" key="1">
    <source>
        <dbReference type="HAMAP-Rule" id="MF_01595"/>
    </source>
</evidence>
<reference key="1">
    <citation type="submission" date="2008-02" db="EMBL/GenBank/DDBJ databases">
        <title>Complete sequence of Pseudomonas putida W619.</title>
        <authorList>
            <person name="Copeland A."/>
            <person name="Lucas S."/>
            <person name="Lapidus A."/>
            <person name="Barry K."/>
            <person name="Detter J.C."/>
            <person name="Glavina del Rio T."/>
            <person name="Dalin E."/>
            <person name="Tice H."/>
            <person name="Pitluck S."/>
            <person name="Chain P."/>
            <person name="Malfatti S."/>
            <person name="Shin M."/>
            <person name="Vergez L."/>
            <person name="Schmutz J."/>
            <person name="Larimer F."/>
            <person name="Land M."/>
            <person name="Hauser L."/>
            <person name="Kyrpides N."/>
            <person name="Kim E."/>
            <person name="Taghavi S."/>
            <person name="Vangronsveld D."/>
            <person name="van der Lelie D."/>
            <person name="Richardson P."/>
        </authorList>
    </citation>
    <scope>NUCLEOTIDE SEQUENCE [LARGE SCALE GENOMIC DNA]</scope>
    <source>
        <strain>W619</strain>
    </source>
</reference>
<comment type="function">
    <text evidence="1">Involved in mRNA degradation. Catalyzes the phosphorolysis of single-stranded polyribonucleotides processively in the 3'- to 5'-direction.</text>
</comment>
<comment type="catalytic activity">
    <reaction evidence="1">
        <text>RNA(n+1) + phosphate = RNA(n) + a ribonucleoside 5'-diphosphate</text>
        <dbReference type="Rhea" id="RHEA:22096"/>
        <dbReference type="Rhea" id="RHEA-COMP:14527"/>
        <dbReference type="Rhea" id="RHEA-COMP:17342"/>
        <dbReference type="ChEBI" id="CHEBI:43474"/>
        <dbReference type="ChEBI" id="CHEBI:57930"/>
        <dbReference type="ChEBI" id="CHEBI:140395"/>
        <dbReference type="EC" id="2.7.7.8"/>
    </reaction>
</comment>
<comment type="cofactor">
    <cofactor evidence="1">
        <name>Mg(2+)</name>
        <dbReference type="ChEBI" id="CHEBI:18420"/>
    </cofactor>
</comment>
<comment type="subunit">
    <text evidence="1">Component of the RNA degradosome, which is a multiprotein complex involved in RNA processing and mRNA degradation.</text>
</comment>
<comment type="subcellular location">
    <subcellularLocation>
        <location evidence="1">Cytoplasm</location>
    </subcellularLocation>
</comment>
<comment type="similarity">
    <text evidence="1">Belongs to the polyribonucleotide nucleotidyltransferase family.</text>
</comment>
<sequence>MNPVIKKFQFGQSTVTLETGRIARQATGAVLVTVDNDVTVLVTVVGAKQADPGKGFFPLSVHYQEKTYAAGKIPGGFFKREGRPSEKETLTSRLIDRPIRPLFPEGFMNEVQVVCTVVSTSKKTDPDIAAMIGTSAALAISGIPFEGPIGAARVAFHESTGYLLNPTYEQLAASSLDMVVAGTSDAVLMVESEAQELTEDQMLGAVLFAHDEFQAVIQAVKELAAEAGKPTWDWKPAVANTELFNAIRAEFGEAVSQGYTITVKADRYARLGELRDQAIAKFSGEEGQPSASEVKEIFGEIEYRTVRENIVNGKPRIDGRDTKTVRPLNIEVGVLPKTHGSALFTRGETQALVVATLGTARDAQLLDTLEGEKKDPFMLHYNFPPFSVGECGRMGGAGRREIGHGRLARRSVQAMLPAADVFPYTIRVVSEITESNGSSSMASVCGASLALMDAGVPMKAPVAGIAMGLVKEGEKFAVLTDILGDEDHLGDMDFKVAGTAKGVTALQMDIKINGITEEIMEIALGQALEARLNILGQMNQIIGQSRTELSANAPTMIAMKIDTDKIRDVIGKGGATIRAICEETKASIDIEDDGSIKIFGETKEAAEAARQRVLGITAEAEIGKIYVGKVERIVDFGAFVNILPGKDGLVHISMLSDARVEKVTDILKEGQEVEVLVLDVDNRGRIKLSIKDVAAAKASGV</sequence>
<keyword id="KW-0963">Cytoplasm</keyword>
<keyword id="KW-0460">Magnesium</keyword>
<keyword id="KW-0479">Metal-binding</keyword>
<keyword id="KW-0548">Nucleotidyltransferase</keyword>
<keyword id="KW-0694">RNA-binding</keyword>
<keyword id="KW-0808">Transferase</keyword>
<protein>
    <recommendedName>
        <fullName evidence="1">Polyribonucleotide nucleotidyltransferase</fullName>
        <ecNumber evidence="1">2.7.7.8</ecNumber>
    </recommendedName>
    <alternativeName>
        <fullName evidence="1">Polynucleotide phosphorylase</fullName>
        <shortName evidence="1">PNPase</shortName>
    </alternativeName>
</protein>